<keyword id="KW-0143">Chaperone</keyword>
<keyword id="KW-0963">Cytoplasm</keyword>
<keyword id="KW-0342">GTP-binding</keyword>
<keyword id="KW-0996">Nickel insertion</keyword>
<keyword id="KW-0547">Nucleotide-binding</keyword>
<feature type="chain" id="PRO_0000347364" description="Urease accessory protein UreG 2">
    <location>
        <begin position="1"/>
        <end position="212"/>
    </location>
</feature>
<feature type="binding site" evidence="1">
    <location>
        <begin position="11"/>
        <end position="18"/>
    </location>
    <ligand>
        <name>GTP</name>
        <dbReference type="ChEBI" id="CHEBI:37565"/>
    </ligand>
</feature>
<comment type="function">
    <text evidence="1">Facilitates the functional incorporation of the urease nickel metallocenter. This process requires GTP hydrolysis, probably effectuated by UreG.</text>
</comment>
<comment type="function">
    <text>Disrupting the ure2 operon has no effect on urease activity, or pathogen survival in BALB/c mice when inoculated by gavage, but confers slightly enhanced resistance to low pH killing in vitro.</text>
</comment>
<comment type="subunit">
    <text evidence="1">Homodimer. UreD, UreF and UreG form a complex that acts as a GTP-hydrolysis-dependent molecular chaperone, activating the urease apoprotein by helping to assemble the nickel containing metallocenter of UreC. The UreE protein probably delivers the nickel.</text>
</comment>
<comment type="subcellular location">
    <subcellularLocation>
        <location evidence="1">Cytoplasm</location>
    </subcellularLocation>
</comment>
<comment type="similarity">
    <text evidence="1">Belongs to the SIMIBI class G3E GTPase family. UreG subfamily.</text>
</comment>
<gene>
    <name evidence="1" type="primary">ureG2</name>
    <name type="synonym">ureG-2</name>
    <name type="ordered locus">BR1361</name>
    <name type="ordered locus">BS1330_I1356</name>
</gene>
<name>UREG2_BRUSU</name>
<organism>
    <name type="scientific">Brucella suis biovar 1 (strain 1330)</name>
    <dbReference type="NCBI Taxonomy" id="204722"/>
    <lineage>
        <taxon>Bacteria</taxon>
        <taxon>Pseudomonadati</taxon>
        <taxon>Pseudomonadota</taxon>
        <taxon>Alphaproteobacteria</taxon>
        <taxon>Hyphomicrobiales</taxon>
        <taxon>Brucellaceae</taxon>
        <taxon>Brucella/Ochrobactrum group</taxon>
        <taxon>Brucella</taxon>
    </lineage>
</organism>
<protein>
    <recommendedName>
        <fullName evidence="1">Urease accessory protein UreG 2</fullName>
    </recommendedName>
</protein>
<evidence type="ECO:0000255" key="1">
    <source>
        <dbReference type="HAMAP-Rule" id="MF_01389"/>
    </source>
</evidence>
<reference key="1">
    <citation type="journal article" date="2002" name="Proc. Natl. Acad. Sci. U.S.A.">
        <title>The Brucella suis genome reveals fundamental similarities between animal and plant pathogens and symbionts.</title>
        <authorList>
            <person name="Paulsen I.T."/>
            <person name="Seshadri R."/>
            <person name="Nelson K.E."/>
            <person name="Eisen J.A."/>
            <person name="Heidelberg J.F."/>
            <person name="Read T.D."/>
            <person name="Dodson R.J."/>
            <person name="Umayam L.A."/>
            <person name="Brinkac L.M."/>
            <person name="Beanan M.J."/>
            <person name="Daugherty S.C."/>
            <person name="DeBoy R.T."/>
            <person name="Durkin A.S."/>
            <person name="Kolonay J.F."/>
            <person name="Madupu R."/>
            <person name="Nelson W.C."/>
            <person name="Ayodeji B."/>
            <person name="Kraul M."/>
            <person name="Shetty J."/>
            <person name="Malek J.A."/>
            <person name="Van Aken S.E."/>
            <person name="Riedmuller S."/>
            <person name="Tettelin H."/>
            <person name="Gill S.R."/>
            <person name="White O."/>
            <person name="Salzberg S.L."/>
            <person name="Hoover D.L."/>
            <person name="Lindler L.E."/>
            <person name="Halling S.M."/>
            <person name="Boyle S.M."/>
            <person name="Fraser C.M."/>
        </authorList>
    </citation>
    <scope>NUCLEOTIDE SEQUENCE [LARGE SCALE GENOMIC DNA]</scope>
    <source>
        <strain>1330</strain>
    </source>
</reference>
<reference key="2">
    <citation type="journal article" date="2011" name="J. Bacteriol.">
        <title>Revised genome sequence of Brucella suis 1330.</title>
        <authorList>
            <person name="Tae H."/>
            <person name="Shallom S."/>
            <person name="Settlage R."/>
            <person name="Preston D."/>
            <person name="Adams L.G."/>
            <person name="Garner H.R."/>
        </authorList>
    </citation>
    <scope>NUCLEOTIDE SEQUENCE [LARGE SCALE GENOMIC DNA]</scope>
    <source>
        <strain>1330</strain>
    </source>
</reference>
<reference key="3">
    <citation type="journal article" date="2007" name="BMC Microbiol.">
        <title>Brucella suis urease encoded by ure1 but not ure2 is necessary for intestinal infection of BALB/c mice.</title>
        <authorList>
            <person name="Bandara A.B."/>
            <person name="Contreras A."/>
            <person name="Contreras-Rodriguez A."/>
            <person name="Martins A.M."/>
            <person name="Dobrean V."/>
            <person name="Poff-Reichow S."/>
            <person name="Rajasekaran P."/>
            <person name="Sriranganathan N."/>
            <person name="Schurig G.G."/>
            <person name="Boyle S.M."/>
        </authorList>
    </citation>
    <scope>OPERON DISRUPTION</scope>
    <scope>LACK OF ROLE IN VIRULENCE</scope>
    <source>
        <strain>1330</strain>
    </source>
</reference>
<accession>Q8FZV9</accession>
<accession>G0KB46</accession>
<proteinExistence type="inferred from homology"/>
<dbReference type="EMBL" id="AE014291">
    <property type="protein sequence ID" value="AAN30275.1"/>
    <property type="molecule type" value="Genomic_DNA"/>
</dbReference>
<dbReference type="EMBL" id="CP002997">
    <property type="protein sequence ID" value="AEM18692.1"/>
    <property type="molecule type" value="Genomic_DNA"/>
</dbReference>
<dbReference type="SMR" id="Q8FZV9"/>
<dbReference type="GeneID" id="45052381"/>
<dbReference type="KEGG" id="bms:BR1361"/>
<dbReference type="KEGG" id="bsi:BS1330_I1356"/>
<dbReference type="PATRIC" id="fig|204722.21.peg.836"/>
<dbReference type="HOGENOM" id="CLU_072144_1_0_5"/>
<dbReference type="PhylomeDB" id="Q8FZV9"/>
<dbReference type="Proteomes" id="UP000007104">
    <property type="component" value="Chromosome I"/>
</dbReference>
<dbReference type="GO" id="GO:0005737">
    <property type="term" value="C:cytoplasm"/>
    <property type="evidence" value="ECO:0007669"/>
    <property type="project" value="UniProtKB-SubCell"/>
</dbReference>
<dbReference type="GO" id="GO:0005525">
    <property type="term" value="F:GTP binding"/>
    <property type="evidence" value="ECO:0007669"/>
    <property type="project" value="UniProtKB-KW"/>
</dbReference>
<dbReference type="GO" id="GO:0003924">
    <property type="term" value="F:GTPase activity"/>
    <property type="evidence" value="ECO:0007669"/>
    <property type="project" value="InterPro"/>
</dbReference>
<dbReference type="GO" id="GO:0016151">
    <property type="term" value="F:nickel cation binding"/>
    <property type="evidence" value="ECO:0007669"/>
    <property type="project" value="UniProtKB-UniRule"/>
</dbReference>
<dbReference type="GO" id="GO:0043419">
    <property type="term" value="P:urea catabolic process"/>
    <property type="evidence" value="ECO:0007669"/>
    <property type="project" value="InterPro"/>
</dbReference>
<dbReference type="Gene3D" id="3.40.50.300">
    <property type="entry name" value="P-loop containing nucleotide triphosphate hydrolases"/>
    <property type="match status" value="1"/>
</dbReference>
<dbReference type="HAMAP" id="MF_01389">
    <property type="entry name" value="UreG"/>
    <property type="match status" value="1"/>
</dbReference>
<dbReference type="InterPro" id="IPR003495">
    <property type="entry name" value="CobW/HypB/UreG_nucleotide-bd"/>
</dbReference>
<dbReference type="InterPro" id="IPR027417">
    <property type="entry name" value="P-loop_NTPase"/>
</dbReference>
<dbReference type="InterPro" id="IPR004400">
    <property type="entry name" value="UreG"/>
</dbReference>
<dbReference type="NCBIfam" id="TIGR00101">
    <property type="entry name" value="ureG"/>
    <property type="match status" value="1"/>
</dbReference>
<dbReference type="PANTHER" id="PTHR31715">
    <property type="entry name" value="UREASE ACCESSORY PROTEIN G"/>
    <property type="match status" value="1"/>
</dbReference>
<dbReference type="PANTHER" id="PTHR31715:SF0">
    <property type="entry name" value="UREASE ACCESSORY PROTEIN G"/>
    <property type="match status" value="1"/>
</dbReference>
<dbReference type="Pfam" id="PF02492">
    <property type="entry name" value="cobW"/>
    <property type="match status" value="1"/>
</dbReference>
<dbReference type="PIRSF" id="PIRSF005624">
    <property type="entry name" value="Ni-bind_GTPase"/>
    <property type="match status" value="1"/>
</dbReference>
<dbReference type="SUPFAM" id="SSF52540">
    <property type="entry name" value="P-loop containing nucleoside triphosphate hydrolases"/>
    <property type="match status" value="1"/>
</dbReference>
<sequence length="212" mass="22954">MKKIPRIGVGGPVGSGKMAIIEAVVPILIKLGYRILVITNDIVTTEDAKHVQRTLKGVLIEDRIVGVETGGCPHTAVREDPSMNLAAVEEMEAKFPDTDLVLLESGGDNLTLTFSPALIDFFIYVIDVAAGDKIPCKNGPGISQSDILVINKTDLAPYVGASLQVMDDDSRMMRGKKPFVFTNCKTNEGIDDLVHLIRENVLFDTEVSKESA</sequence>